<reference key="1">
    <citation type="journal article" date="2014" name="PLoS ONE">
        <title>Cloning and characterization of a norbelladine 4'-O-methyltransferase involved in the biosynthesis of the Alzheimer's drug galanthamine in Narcissus sp. aff. pseudonarcissus.</title>
        <authorList>
            <person name="Kilgore M.B."/>
            <person name="Augustin M.M."/>
            <person name="Starks C.M."/>
            <person name="O'Neil-Johnson M."/>
            <person name="May G.D."/>
            <person name="Crow J.A."/>
            <person name="Kutchan T.M."/>
        </authorList>
    </citation>
    <scope>NUCLEOTIDE SEQUENCE [MRNA]</scope>
    <source>
        <strain>cv. Carlton</strain>
        <tissue>Bulb</tissue>
    </source>
</reference>
<protein>
    <recommendedName>
        <fullName evidence="4">Norbelladine 4'-O-methyltransferase 5</fullName>
        <shortName evidence="4">NpN4OMT5</shortName>
        <ecNumber evidence="1">2.1.1.336</ecNumber>
    </recommendedName>
</protein>
<dbReference type="EC" id="2.1.1.336" evidence="1"/>
<dbReference type="EMBL" id="KJ584565">
    <property type="protein sequence ID" value="AIL54545.1"/>
    <property type="molecule type" value="mRNA"/>
</dbReference>
<dbReference type="SMR" id="A0A077ESS0"/>
<dbReference type="GO" id="GO:0046872">
    <property type="term" value="F:metal ion binding"/>
    <property type="evidence" value="ECO:0007669"/>
    <property type="project" value="UniProtKB-KW"/>
</dbReference>
<dbReference type="GO" id="GO:0008171">
    <property type="term" value="F:O-methyltransferase activity"/>
    <property type="evidence" value="ECO:0007669"/>
    <property type="project" value="InterPro"/>
</dbReference>
<dbReference type="GO" id="GO:0008757">
    <property type="term" value="F:S-adenosylmethionine-dependent methyltransferase activity"/>
    <property type="evidence" value="ECO:0007669"/>
    <property type="project" value="TreeGrafter"/>
</dbReference>
<dbReference type="GO" id="GO:0009820">
    <property type="term" value="P:alkaloid metabolic process"/>
    <property type="evidence" value="ECO:0007669"/>
    <property type="project" value="UniProtKB-KW"/>
</dbReference>
<dbReference type="GO" id="GO:0032259">
    <property type="term" value="P:methylation"/>
    <property type="evidence" value="ECO:0007669"/>
    <property type="project" value="UniProtKB-KW"/>
</dbReference>
<dbReference type="Gene3D" id="3.40.50.150">
    <property type="entry name" value="Vaccinia Virus protein VP39"/>
    <property type="match status" value="1"/>
</dbReference>
<dbReference type="InterPro" id="IPR050362">
    <property type="entry name" value="Cation-dep_OMT"/>
</dbReference>
<dbReference type="InterPro" id="IPR029063">
    <property type="entry name" value="SAM-dependent_MTases_sf"/>
</dbReference>
<dbReference type="InterPro" id="IPR002935">
    <property type="entry name" value="SAM_O-MeTrfase"/>
</dbReference>
<dbReference type="PANTHER" id="PTHR10509">
    <property type="entry name" value="O-METHYLTRANSFERASE-RELATED"/>
    <property type="match status" value="1"/>
</dbReference>
<dbReference type="PANTHER" id="PTHR10509:SF34">
    <property type="entry name" value="TAPETUM-SPECIFIC METHYLTRANSFERASE 1"/>
    <property type="match status" value="1"/>
</dbReference>
<dbReference type="Pfam" id="PF01596">
    <property type="entry name" value="Methyltransf_3"/>
    <property type="match status" value="1"/>
</dbReference>
<dbReference type="SUPFAM" id="SSF53335">
    <property type="entry name" value="S-adenosyl-L-methionine-dependent methyltransferases"/>
    <property type="match status" value="1"/>
</dbReference>
<dbReference type="PROSITE" id="PS51682">
    <property type="entry name" value="SAM_OMT_I"/>
    <property type="match status" value="1"/>
</dbReference>
<accession>A0A077ESS0</accession>
<feature type="chain" id="PRO_0000450645" description="Norbelladine 4'-O-methyltransferase 5">
    <location>
        <begin position="1"/>
        <end position="239"/>
    </location>
</feature>
<feature type="binding site" evidence="3">
    <location>
        <position position="55"/>
    </location>
    <ligand>
        <name>S-adenosyl-L-methionine</name>
        <dbReference type="ChEBI" id="CHEBI:59789"/>
    </ligand>
</feature>
<feature type="binding site" evidence="3">
    <location>
        <position position="77"/>
    </location>
    <ligand>
        <name>S-adenosyl-L-methionine</name>
        <dbReference type="ChEBI" id="CHEBI:59789"/>
    </ligand>
</feature>
<feature type="binding site" evidence="3">
    <location>
        <begin position="79"/>
        <end position="80"/>
    </location>
    <ligand>
        <name>S-adenosyl-L-methionine</name>
        <dbReference type="ChEBI" id="CHEBI:59789"/>
    </ligand>
</feature>
<feature type="binding site" evidence="3">
    <location>
        <position position="85"/>
    </location>
    <ligand>
        <name>S-adenosyl-L-methionine</name>
        <dbReference type="ChEBI" id="CHEBI:59789"/>
    </ligand>
</feature>
<feature type="binding site" evidence="3">
    <location>
        <position position="103"/>
    </location>
    <ligand>
        <name>S-adenosyl-L-methionine</name>
        <dbReference type="ChEBI" id="CHEBI:59789"/>
    </ligand>
</feature>
<feature type="binding site" evidence="3">
    <location>
        <position position="132"/>
    </location>
    <ligand>
        <name>S-adenosyl-L-methionine</name>
        <dbReference type="ChEBI" id="CHEBI:59789"/>
    </ligand>
</feature>
<feature type="binding site" evidence="3">
    <location>
        <position position="155"/>
    </location>
    <ligand>
        <name>a divalent metal cation</name>
        <dbReference type="ChEBI" id="CHEBI:60240"/>
    </ligand>
</feature>
<feature type="binding site" evidence="3">
    <location>
        <position position="157"/>
    </location>
    <ligand>
        <name>S-adenosyl-L-methionine</name>
        <dbReference type="ChEBI" id="CHEBI:59789"/>
    </ligand>
</feature>
<feature type="binding site" evidence="3">
    <location>
        <position position="181"/>
    </location>
    <ligand>
        <name>a divalent metal cation</name>
        <dbReference type="ChEBI" id="CHEBI:60240"/>
    </ligand>
</feature>
<feature type="binding site" evidence="3">
    <location>
        <position position="182"/>
    </location>
    <ligand>
        <name>a divalent metal cation</name>
        <dbReference type="ChEBI" id="CHEBI:60240"/>
    </ligand>
</feature>
<gene>
    <name evidence="4" type="primary">N4OMT5</name>
</gene>
<name>NOMT5_NARAP</name>
<proteinExistence type="evidence at transcript level"/>
<organism>
    <name type="scientific">Narcissus aff. pseudonarcissus MK-2014</name>
    <name type="common">Daffodil</name>
    <dbReference type="NCBI Taxonomy" id="1540222"/>
    <lineage>
        <taxon>Eukaryota</taxon>
        <taxon>Viridiplantae</taxon>
        <taxon>Streptophyta</taxon>
        <taxon>Embryophyta</taxon>
        <taxon>Tracheophyta</taxon>
        <taxon>Spermatophyta</taxon>
        <taxon>Magnoliopsida</taxon>
        <taxon>Liliopsida</taxon>
        <taxon>Asparagales</taxon>
        <taxon>Amaryllidaceae</taxon>
        <taxon>Amaryllidoideae</taxon>
        <taxon>Narcissus</taxon>
    </lineage>
</organism>
<keyword id="KW-0017">Alkaloid metabolism</keyword>
<keyword id="KW-0479">Metal-binding</keyword>
<keyword id="KW-0489">Methyltransferase</keyword>
<keyword id="KW-0949">S-adenosyl-L-methionine</keyword>
<keyword id="KW-0808">Transferase</keyword>
<comment type="function">
    <text evidence="1 2">4'-O-methyltransferase converting norbelladine to 4'-O-methylnorbelladine (By similarity). 4'-O-methylnorbelladine is a precursor to all Amaryllidaceae alkaloids such as galanthamine, lycorine and haemanthamine, and including haemanthamine- and crinamine-type alkaloids, promising anticancer agents (By similarity).</text>
</comment>
<comment type="catalytic activity">
    <reaction evidence="1">
        <text>norbelladine + S-adenosyl-L-methionine = 4'-O-methylnorbelladine + S-adenosyl-L-homocysteine + H(+)</text>
        <dbReference type="Rhea" id="RHEA:51268"/>
        <dbReference type="ChEBI" id="CHEBI:15378"/>
        <dbReference type="ChEBI" id="CHEBI:57856"/>
        <dbReference type="ChEBI" id="CHEBI:59789"/>
        <dbReference type="ChEBI" id="CHEBI:133993"/>
        <dbReference type="ChEBI" id="CHEBI:134001"/>
        <dbReference type="EC" id="2.1.1.336"/>
    </reaction>
</comment>
<comment type="cofactor">
    <cofactor evidence="1">
        <name>Mg(2+)</name>
        <dbReference type="ChEBI" id="CHEBI:18420"/>
    </cofactor>
</comment>
<comment type="pathway">
    <text evidence="1">Alkaloid biosynthesis.</text>
</comment>
<comment type="similarity">
    <text evidence="5">Belongs to the class I-like SAM-binding methyltransferase superfamily. Cation-dependent O-methyltransferase family.</text>
</comment>
<evidence type="ECO:0000250" key="1">
    <source>
        <dbReference type="UniProtKB" id="A0A077EWA5"/>
    </source>
</evidence>
<evidence type="ECO:0000250" key="2">
    <source>
        <dbReference type="UniProtKB" id="A0A2H5AIZ6"/>
    </source>
</evidence>
<evidence type="ECO:0000255" key="3">
    <source>
        <dbReference type="PROSITE-ProRule" id="PRU01019"/>
    </source>
</evidence>
<evidence type="ECO:0000303" key="4">
    <source>
    </source>
</evidence>
<evidence type="ECO:0000305" key="5"/>
<sequence>MGASIDDYCLIHKKILHSEDLLKYILETSAYPREHEQLKGLREVTEKHEWSSALVPADEGLFLSMLLKLMNAKRTIEIGVYTGYSLLTTALALPEDGKITAIDVNKSFFEIGLPFIQKAGVEHKINFIESEALPVLDQMLQETKEEDLYDYAFVDADKSNYANYHERLVKLVRIGGAILYDNTLWYGSVAYPEYPGLHPEEEVARLSFRNLNTFLAADPRVEISQVSIGDGVTICRRLY</sequence>